<comment type="function">
    <text evidence="1">Necessary for efficient RNA polymerase transcription elongation past template-encoded arresting sites. The arresting sites in DNA have the property of trapping a certain fraction of elongating RNA polymerases that pass through, resulting in locked ternary complexes. Cleavage of the nascent transcript by cleavage factors such as GreA or GreB allows the resumption of elongation from the new 3'terminus. GreA releases sequences of 2 to 3 nucleotides.</text>
</comment>
<comment type="similarity">
    <text evidence="1">Belongs to the GreA/GreB family.</text>
</comment>
<evidence type="ECO:0000255" key="1">
    <source>
        <dbReference type="HAMAP-Rule" id="MF_00105"/>
    </source>
</evidence>
<sequence length="164" mass="18287">MNREPMSMHGYNKICAELKQLKEVERPNIVKEIDIARGHGDLKENAEYHAAKEKQRFIEARIVDLSEIISNAQVIDPGALMHNKVSFGSTIKILNLDNDKEFSYTIVGSVESDPAKGLISFGSPIAKSLIGKSKGDVASIQLPNGESDFEILDIYYKEICFDEN</sequence>
<name>GREA_HELAH</name>
<protein>
    <recommendedName>
        <fullName evidence="1">Transcription elongation factor GreA</fullName>
    </recommendedName>
    <alternativeName>
        <fullName evidence="1">Transcript cleavage factor GreA</fullName>
    </alternativeName>
</protein>
<dbReference type="EMBL" id="AM260522">
    <property type="protein sequence ID" value="CAJ99983.1"/>
    <property type="molecule type" value="Genomic_DNA"/>
</dbReference>
<dbReference type="RefSeq" id="WP_011578090.1">
    <property type="nucleotide sequence ID" value="NC_008229.1"/>
</dbReference>
<dbReference type="SMR" id="Q17WJ3"/>
<dbReference type="STRING" id="382638.Hac_1229"/>
<dbReference type="GeneID" id="31758575"/>
<dbReference type="KEGG" id="hac:Hac_1229"/>
<dbReference type="eggNOG" id="COG0782">
    <property type="taxonomic scope" value="Bacteria"/>
</dbReference>
<dbReference type="HOGENOM" id="CLU_101379_2_0_7"/>
<dbReference type="OrthoDB" id="9808774at2"/>
<dbReference type="BioCyc" id="HACI382638:HAC_RS05315-MONOMER"/>
<dbReference type="Proteomes" id="UP000000775">
    <property type="component" value="Chromosome"/>
</dbReference>
<dbReference type="GO" id="GO:0003677">
    <property type="term" value="F:DNA binding"/>
    <property type="evidence" value="ECO:0007669"/>
    <property type="project" value="UniProtKB-UniRule"/>
</dbReference>
<dbReference type="GO" id="GO:0070063">
    <property type="term" value="F:RNA polymerase binding"/>
    <property type="evidence" value="ECO:0007669"/>
    <property type="project" value="InterPro"/>
</dbReference>
<dbReference type="GO" id="GO:0006354">
    <property type="term" value="P:DNA-templated transcription elongation"/>
    <property type="evidence" value="ECO:0007669"/>
    <property type="project" value="TreeGrafter"/>
</dbReference>
<dbReference type="GO" id="GO:0032784">
    <property type="term" value="P:regulation of DNA-templated transcription elongation"/>
    <property type="evidence" value="ECO:0007669"/>
    <property type="project" value="UniProtKB-UniRule"/>
</dbReference>
<dbReference type="FunFam" id="1.10.287.180:FF:000001">
    <property type="entry name" value="Transcription elongation factor GreA"/>
    <property type="match status" value="1"/>
</dbReference>
<dbReference type="FunFam" id="3.10.50.30:FF:000001">
    <property type="entry name" value="Transcription elongation factor GreA"/>
    <property type="match status" value="1"/>
</dbReference>
<dbReference type="Gene3D" id="3.10.50.30">
    <property type="entry name" value="Transcription elongation factor, GreA/GreB, C-terminal domain"/>
    <property type="match status" value="1"/>
</dbReference>
<dbReference type="Gene3D" id="1.10.287.180">
    <property type="entry name" value="Transcription elongation factor, GreA/GreB, N-terminal domain"/>
    <property type="match status" value="1"/>
</dbReference>
<dbReference type="HAMAP" id="MF_00105">
    <property type="entry name" value="GreA_GreB"/>
    <property type="match status" value="1"/>
</dbReference>
<dbReference type="InterPro" id="IPR036953">
    <property type="entry name" value="GreA/GreB_C_sf"/>
</dbReference>
<dbReference type="InterPro" id="IPR018151">
    <property type="entry name" value="TF_GreA/GreB_CS"/>
</dbReference>
<dbReference type="InterPro" id="IPR006359">
    <property type="entry name" value="Tscrpt_elong_fac_GreA"/>
</dbReference>
<dbReference type="InterPro" id="IPR028624">
    <property type="entry name" value="Tscrpt_elong_fac_GreA/B"/>
</dbReference>
<dbReference type="InterPro" id="IPR001437">
    <property type="entry name" value="Tscrpt_elong_fac_GreA/B_C"/>
</dbReference>
<dbReference type="InterPro" id="IPR023459">
    <property type="entry name" value="Tscrpt_elong_fac_GreA/B_fam"/>
</dbReference>
<dbReference type="InterPro" id="IPR022691">
    <property type="entry name" value="Tscrpt_elong_fac_GreA/B_N"/>
</dbReference>
<dbReference type="InterPro" id="IPR036805">
    <property type="entry name" value="Tscrpt_elong_fac_GreA/B_N_sf"/>
</dbReference>
<dbReference type="NCBIfam" id="TIGR01462">
    <property type="entry name" value="greA"/>
    <property type="match status" value="1"/>
</dbReference>
<dbReference type="NCBIfam" id="NF001261">
    <property type="entry name" value="PRK00226.1-2"/>
    <property type="match status" value="1"/>
</dbReference>
<dbReference type="NCBIfam" id="NF001263">
    <property type="entry name" value="PRK00226.1-4"/>
    <property type="match status" value="1"/>
</dbReference>
<dbReference type="NCBIfam" id="NF001264">
    <property type="entry name" value="PRK00226.1-5"/>
    <property type="match status" value="1"/>
</dbReference>
<dbReference type="PANTHER" id="PTHR30437">
    <property type="entry name" value="TRANSCRIPTION ELONGATION FACTOR GREA"/>
    <property type="match status" value="1"/>
</dbReference>
<dbReference type="PANTHER" id="PTHR30437:SF4">
    <property type="entry name" value="TRANSCRIPTION ELONGATION FACTOR GREA"/>
    <property type="match status" value="1"/>
</dbReference>
<dbReference type="Pfam" id="PF01272">
    <property type="entry name" value="GreA_GreB"/>
    <property type="match status" value="1"/>
</dbReference>
<dbReference type="Pfam" id="PF03449">
    <property type="entry name" value="GreA_GreB_N"/>
    <property type="match status" value="1"/>
</dbReference>
<dbReference type="PIRSF" id="PIRSF006092">
    <property type="entry name" value="GreA_GreB"/>
    <property type="match status" value="1"/>
</dbReference>
<dbReference type="SUPFAM" id="SSF54534">
    <property type="entry name" value="FKBP-like"/>
    <property type="match status" value="1"/>
</dbReference>
<dbReference type="SUPFAM" id="SSF46557">
    <property type="entry name" value="GreA transcript cleavage protein, N-terminal domain"/>
    <property type="match status" value="1"/>
</dbReference>
<dbReference type="PROSITE" id="PS00829">
    <property type="entry name" value="GREAB_1"/>
    <property type="match status" value="1"/>
</dbReference>
<dbReference type="PROSITE" id="PS00830">
    <property type="entry name" value="GREAB_2"/>
    <property type="match status" value="1"/>
</dbReference>
<proteinExistence type="inferred from homology"/>
<keyword id="KW-0238">DNA-binding</keyword>
<keyword id="KW-0804">Transcription</keyword>
<keyword id="KW-0805">Transcription regulation</keyword>
<gene>
    <name evidence="1" type="primary">greA</name>
    <name type="ordered locus">Hac_1229</name>
</gene>
<reference key="1">
    <citation type="journal article" date="2006" name="PLoS Genet.">
        <title>Who ate whom? Adaptive Helicobacter genomic changes that accompanied a host jump from early humans to large felines.</title>
        <authorList>
            <person name="Eppinger M."/>
            <person name="Baar C."/>
            <person name="Linz B."/>
            <person name="Raddatz G."/>
            <person name="Lanz C."/>
            <person name="Keller H."/>
            <person name="Morelli G."/>
            <person name="Gressmann H."/>
            <person name="Achtman M."/>
            <person name="Schuster S.C."/>
        </authorList>
    </citation>
    <scope>NUCLEOTIDE SEQUENCE [LARGE SCALE GENOMIC DNA]</scope>
    <source>
        <strain>Sheeba</strain>
    </source>
</reference>
<organism>
    <name type="scientific">Helicobacter acinonychis (strain Sheeba)</name>
    <dbReference type="NCBI Taxonomy" id="382638"/>
    <lineage>
        <taxon>Bacteria</taxon>
        <taxon>Pseudomonadati</taxon>
        <taxon>Campylobacterota</taxon>
        <taxon>Epsilonproteobacteria</taxon>
        <taxon>Campylobacterales</taxon>
        <taxon>Helicobacteraceae</taxon>
        <taxon>Helicobacter</taxon>
    </lineage>
</organism>
<feature type="chain" id="PRO_1000075872" description="Transcription elongation factor GreA">
    <location>
        <begin position="1"/>
        <end position="164"/>
    </location>
</feature>
<accession>Q17WJ3</accession>